<evidence type="ECO:0000255" key="1">
    <source>
        <dbReference type="HAMAP-Rule" id="MF_00572"/>
    </source>
</evidence>
<dbReference type="EC" id="2.3.3.13" evidence="1"/>
<dbReference type="EMBL" id="CP001069">
    <property type="protein sequence ID" value="ACD29890.1"/>
    <property type="molecule type" value="Genomic_DNA"/>
</dbReference>
<dbReference type="SMR" id="B2UJY9"/>
<dbReference type="STRING" id="402626.Rpic_4806"/>
<dbReference type="KEGG" id="rpi:Rpic_4806"/>
<dbReference type="eggNOG" id="COG0119">
    <property type="taxonomic scope" value="Bacteria"/>
</dbReference>
<dbReference type="HOGENOM" id="CLU_004588_3_0_4"/>
<dbReference type="UniPathway" id="UPA00048">
    <property type="reaction ID" value="UER00070"/>
</dbReference>
<dbReference type="GO" id="GO:0005737">
    <property type="term" value="C:cytoplasm"/>
    <property type="evidence" value="ECO:0007669"/>
    <property type="project" value="UniProtKB-SubCell"/>
</dbReference>
<dbReference type="GO" id="GO:0003852">
    <property type="term" value="F:2-isopropylmalate synthase activity"/>
    <property type="evidence" value="ECO:0007669"/>
    <property type="project" value="UniProtKB-UniRule"/>
</dbReference>
<dbReference type="GO" id="GO:0003985">
    <property type="term" value="F:acetyl-CoA C-acetyltransferase activity"/>
    <property type="evidence" value="ECO:0007669"/>
    <property type="project" value="UniProtKB-UniRule"/>
</dbReference>
<dbReference type="GO" id="GO:0000287">
    <property type="term" value="F:magnesium ion binding"/>
    <property type="evidence" value="ECO:0007669"/>
    <property type="project" value="UniProtKB-UniRule"/>
</dbReference>
<dbReference type="GO" id="GO:0009098">
    <property type="term" value="P:L-leucine biosynthetic process"/>
    <property type="evidence" value="ECO:0007669"/>
    <property type="project" value="UniProtKB-UniRule"/>
</dbReference>
<dbReference type="CDD" id="cd07942">
    <property type="entry name" value="DRE_TIM_LeuA"/>
    <property type="match status" value="1"/>
</dbReference>
<dbReference type="FunFam" id="3.20.20.70:FF:000045">
    <property type="entry name" value="2-isopropylmalate synthase"/>
    <property type="match status" value="1"/>
</dbReference>
<dbReference type="Gene3D" id="3.30.160.270">
    <property type="match status" value="1"/>
</dbReference>
<dbReference type="Gene3D" id="3.20.20.70">
    <property type="entry name" value="Aldolase class I"/>
    <property type="match status" value="1"/>
</dbReference>
<dbReference type="HAMAP" id="MF_00572">
    <property type="entry name" value="LeuA_type2"/>
    <property type="match status" value="1"/>
</dbReference>
<dbReference type="InterPro" id="IPR013709">
    <property type="entry name" value="2-isopropylmalate_synth_dimer"/>
</dbReference>
<dbReference type="InterPro" id="IPR002034">
    <property type="entry name" value="AIPM/Hcit_synth_CS"/>
</dbReference>
<dbReference type="InterPro" id="IPR013785">
    <property type="entry name" value="Aldolase_TIM"/>
</dbReference>
<dbReference type="InterPro" id="IPR005668">
    <property type="entry name" value="IPM_Synthase"/>
</dbReference>
<dbReference type="InterPro" id="IPR054692">
    <property type="entry name" value="LeuA-like_post-cat"/>
</dbReference>
<dbReference type="InterPro" id="IPR036230">
    <property type="entry name" value="LeuA_allosteric_dom_sf"/>
</dbReference>
<dbReference type="InterPro" id="IPR039371">
    <property type="entry name" value="LeuA_N_DRE-TIM"/>
</dbReference>
<dbReference type="InterPro" id="IPR000891">
    <property type="entry name" value="PYR_CT"/>
</dbReference>
<dbReference type="NCBIfam" id="TIGR00970">
    <property type="entry name" value="leuA_yeast"/>
    <property type="match status" value="1"/>
</dbReference>
<dbReference type="NCBIfam" id="NF002991">
    <property type="entry name" value="PRK03739.1"/>
    <property type="match status" value="1"/>
</dbReference>
<dbReference type="PANTHER" id="PTHR46911">
    <property type="match status" value="1"/>
</dbReference>
<dbReference type="PANTHER" id="PTHR46911:SF1">
    <property type="entry name" value="2-ISOPROPYLMALATE SYNTHASE"/>
    <property type="match status" value="1"/>
</dbReference>
<dbReference type="Pfam" id="PF00682">
    <property type="entry name" value="HMGL-like"/>
    <property type="match status" value="1"/>
</dbReference>
<dbReference type="Pfam" id="PF22615">
    <property type="entry name" value="IPMS_D2"/>
    <property type="match status" value="1"/>
</dbReference>
<dbReference type="Pfam" id="PF08502">
    <property type="entry name" value="LeuA_dimer"/>
    <property type="match status" value="1"/>
</dbReference>
<dbReference type="SMART" id="SM00917">
    <property type="entry name" value="LeuA_dimer"/>
    <property type="match status" value="1"/>
</dbReference>
<dbReference type="SUPFAM" id="SSF110921">
    <property type="entry name" value="2-isopropylmalate synthase LeuA, allosteric (dimerisation) domain"/>
    <property type="match status" value="1"/>
</dbReference>
<dbReference type="SUPFAM" id="SSF51569">
    <property type="entry name" value="Aldolase"/>
    <property type="match status" value="1"/>
</dbReference>
<dbReference type="SUPFAM" id="SSF89000">
    <property type="entry name" value="post-HMGL domain-like"/>
    <property type="match status" value="1"/>
</dbReference>
<dbReference type="PROSITE" id="PS00815">
    <property type="entry name" value="AIPM_HOMOCIT_SYNTH_1"/>
    <property type="match status" value="1"/>
</dbReference>
<dbReference type="PROSITE" id="PS00816">
    <property type="entry name" value="AIPM_HOMOCIT_SYNTH_2"/>
    <property type="match status" value="1"/>
</dbReference>
<dbReference type="PROSITE" id="PS50991">
    <property type="entry name" value="PYR_CT"/>
    <property type="match status" value="1"/>
</dbReference>
<comment type="function">
    <text evidence="1">Catalyzes the condensation of the acetyl group of acetyl-CoA with 3-methyl-2-oxobutanoate (2-ketoisovalerate) to form 3-carboxy-3-hydroxy-4-methylpentanoate (2-isopropylmalate).</text>
</comment>
<comment type="catalytic activity">
    <reaction evidence="1">
        <text>3-methyl-2-oxobutanoate + acetyl-CoA + H2O = (2S)-2-isopropylmalate + CoA + H(+)</text>
        <dbReference type="Rhea" id="RHEA:21524"/>
        <dbReference type="ChEBI" id="CHEBI:1178"/>
        <dbReference type="ChEBI" id="CHEBI:11851"/>
        <dbReference type="ChEBI" id="CHEBI:15377"/>
        <dbReference type="ChEBI" id="CHEBI:15378"/>
        <dbReference type="ChEBI" id="CHEBI:57287"/>
        <dbReference type="ChEBI" id="CHEBI:57288"/>
        <dbReference type="EC" id="2.3.3.13"/>
    </reaction>
</comment>
<comment type="cofactor">
    <cofactor evidence="1">
        <name>Mg(2+)</name>
        <dbReference type="ChEBI" id="CHEBI:18420"/>
    </cofactor>
</comment>
<comment type="pathway">
    <text evidence="1">Amino-acid biosynthesis; L-leucine biosynthesis; L-leucine from 3-methyl-2-oxobutanoate: step 1/4.</text>
</comment>
<comment type="subunit">
    <text evidence="1">Homodimer.</text>
</comment>
<comment type="subcellular location">
    <subcellularLocation>
        <location evidence="1">Cytoplasm</location>
    </subcellularLocation>
</comment>
<comment type="similarity">
    <text evidence="1">Belongs to the alpha-IPM synthase/homocitrate synthase family. LeuA type 2 subfamily.</text>
</comment>
<proteinExistence type="inferred from homology"/>
<organism>
    <name type="scientific">Ralstonia pickettii (strain 12J)</name>
    <dbReference type="NCBI Taxonomy" id="402626"/>
    <lineage>
        <taxon>Bacteria</taxon>
        <taxon>Pseudomonadati</taxon>
        <taxon>Pseudomonadota</taxon>
        <taxon>Betaproteobacteria</taxon>
        <taxon>Burkholderiales</taxon>
        <taxon>Burkholderiaceae</taxon>
        <taxon>Ralstonia</taxon>
    </lineage>
</organism>
<feature type="chain" id="PRO_1000129510" description="2-isopropylmalate synthase">
    <location>
        <begin position="1"/>
        <end position="570"/>
    </location>
</feature>
<feature type="domain" description="Pyruvate carboxyltransferase" evidence="1">
    <location>
        <begin position="31"/>
        <end position="305"/>
    </location>
</feature>
<feature type="region of interest" description="Regulatory domain" evidence="1">
    <location>
        <begin position="437"/>
        <end position="570"/>
    </location>
</feature>
<feature type="binding site" evidence="1">
    <location>
        <position position="40"/>
    </location>
    <ligand>
        <name>Mg(2+)</name>
        <dbReference type="ChEBI" id="CHEBI:18420"/>
    </ligand>
</feature>
<feature type="binding site" evidence="1">
    <location>
        <position position="244"/>
    </location>
    <ligand>
        <name>Mg(2+)</name>
        <dbReference type="ChEBI" id="CHEBI:18420"/>
    </ligand>
</feature>
<feature type="binding site" evidence="1">
    <location>
        <position position="246"/>
    </location>
    <ligand>
        <name>Mg(2+)</name>
        <dbReference type="ChEBI" id="CHEBI:18420"/>
    </ligand>
</feature>
<feature type="binding site" evidence="1">
    <location>
        <position position="280"/>
    </location>
    <ligand>
        <name>Mg(2+)</name>
        <dbReference type="ChEBI" id="CHEBI:18420"/>
    </ligand>
</feature>
<accession>B2UJY9</accession>
<reference key="1">
    <citation type="submission" date="2008-05" db="EMBL/GenBank/DDBJ databases">
        <title>Complete sequence of chromosome 2 of Ralstonia pickettii 12J.</title>
        <authorList>
            <person name="Lucas S."/>
            <person name="Copeland A."/>
            <person name="Lapidus A."/>
            <person name="Glavina del Rio T."/>
            <person name="Dalin E."/>
            <person name="Tice H."/>
            <person name="Bruce D."/>
            <person name="Goodwin L."/>
            <person name="Pitluck S."/>
            <person name="Meincke L."/>
            <person name="Brettin T."/>
            <person name="Detter J.C."/>
            <person name="Han C."/>
            <person name="Kuske C.R."/>
            <person name="Schmutz J."/>
            <person name="Larimer F."/>
            <person name="Land M."/>
            <person name="Hauser L."/>
            <person name="Kyrpides N."/>
            <person name="Mikhailova N."/>
            <person name="Marsh T."/>
            <person name="Richardson P."/>
        </authorList>
    </citation>
    <scope>NUCLEOTIDE SEQUENCE [LARGE SCALE GENOMIC DNA]</scope>
    <source>
        <strain>12J</strain>
    </source>
</reference>
<name>LEU1_RALPJ</name>
<sequence>MLKNPATKYRPFPAIALADRTWPNKTITRAPIWMSTDLRDGNQALFEPMNAERKMRMFKMLVQIGFKEIEAAFPAASQTDFDFVRELIEGGHIPDGVAIEVLTQAREDLIRRTMESLRGAKRAIIHVYNATAPVFRRTVFNTDREGVKRIAVQSAKLIREIAQTMPETQWTYQYSPEVFSGTELDFALEVCNAVTEVWEPTPEHKIIFNLPATVEMATPNIYADQIEWMHRNLARRDSIILSVHPHNDRGTAVAAAELAVMAGADRVEGCLFGNGERTGNVDIVTLALNLYSQGVDPELDFSHINDVARTCEDCTQLPVHPRHPYVGDLVFTAFSGSHQDAIKKGFAVQKPDAPWEMPYLPIDPADVGRTYDSIIRVNSQSGKGGIAYLLESGYGVAMPRRLQVEFSSTVQKLTDASGREATGADIWALFQQTYLRSDGAIGYVSHRLTERDDGSQHIRLVVNIDDHEHICEGSGNGPLDALVHALSHVLTAPVSIHHYEERALGQGANADAIAFAELAATGVAGSVFGVGVDANLTTASIRAVVGGVNRLIARTGQGMLRRSSAQATVA</sequence>
<protein>
    <recommendedName>
        <fullName evidence="1">2-isopropylmalate synthase</fullName>
        <ecNumber evidence="1">2.3.3.13</ecNumber>
    </recommendedName>
    <alternativeName>
        <fullName evidence="1">Alpha-IPM synthase</fullName>
    </alternativeName>
    <alternativeName>
        <fullName evidence="1">Alpha-isopropylmalate synthase</fullName>
    </alternativeName>
</protein>
<gene>
    <name evidence="1" type="primary">leuA</name>
    <name type="ordered locus">Rpic_4806</name>
</gene>
<keyword id="KW-0028">Amino-acid biosynthesis</keyword>
<keyword id="KW-0100">Branched-chain amino acid biosynthesis</keyword>
<keyword id="KW-0963">Cytoplasm</keyword>
<keyword id="KW-0432">Leucine biosynthesis</keyword>
<keyword id="KW-0460">Magnesium</keyword>
<keyword id="KW-0479">Metal-binding</keyword>
<keyword id="KW-0808">Transferase</keyword>